<name>Y1750_CROS8</name>
<comment type="similarity">
    <text evidence="1">Belongs to the UPF0482 family.</text>
</comment>
<dbReference type="EMBL" id="CP000783">
    <property type="protein sequence ID" value="ABU77004.1"/>
    <property type="molecule type" value="Genomic_DNA"/>
</dbReference>
<dbReference type="RefSeq" id="WP_004387244.1">
    <property type="nucleotide sequence ID" value="NC_009778.1"/>
</dbReference>
<dbReference type="KEGG" id="esa:ESA_01750"/>
<dbReference type="HOGENOM" id="CLU_167574_0_0_6"/>
<dbReference type="Proteomes" id="UP000000260">
    <property type="component" value="Chromosome"/>
</dbReference>
<dbReference type="HAMAP" id="MF_01581">
    <property type="entry name" value="UPF0482"/>
    <property type="match status" value="1"/>
</dbReference>
<dbReference type="InterPro" id="IPR009700">
    <property type="entry name" value="DUF1283"/>
</dbReference>
<dbReference type="NCBIfam" id="NF010180">
    <property type="entry name" value="PRK13659.1"/>
    <property type="match status" value="1"/>
</dbReference>
<dbReference type="Pfam" id="PF06932">
    <property type="entry name" value="DUF1283"/>
    <property type="match status" value="1"/>
</dbReference>
<reference key="1">
    <citation type="journal article" date="2010" name="PLoS ONE">
        <title>Genome sequence of Cronobacter sakazakii BAA-894 and comparative genomic hybridization analysis with other Cronobacter species.</title>
        <authorList>
            <person name="Kucerova E."/>
            <person name="Clifton S.W."/>
            <person name="Xia X.Q."/>
            <person name="Long F."/>
            <person name="Porwollik S."/>
            <person name="Fulton L."/>
            <person name="Fronick C."/>
            <person name="Minx P."/>
            <person name="Kyung K."/>
            <person name="Warren W."/>
            <person name="Fulton R."/>
            <person name="Feng D."/>
            <person name="Wollam A."/>
            <person name="Shah N."/>
            <person name="Bhonagiri V."/>
            <person name="Nash W.E."/>
            <person name="Hallsworth-Pepin K."/>
            <person name="Wilson R.K."/>
            <person name="McClelland M."/>
            <person name="Forsythe S.J."/>
        </authorList>
    </citation>
    <scope>NUCLEOTIDE SEQUENCE [LARGE SCALE GENOMIC DNA]</scope>
    <source>
        <strain>ATCC BAA-894</strain>
    </source>
</reference>
<keyword id="KW-1185">Reference proteome</keyword>
<keyword id="KW-0732">Signal</keyword>
<sequence>MNKFLRHSLLLALLTGALSGVANAQTDKLIIESGDNARTRQDAAMDKEQWNDTRSLRQKVNKRTEKEWDKADVAFDAKDNCEKSANLNAYWEPNTLRCLDRRTGRVINP</sequence>
<protein>
    <recommendedName>
        <fullName evidence="1">UPF0482 protein ESA_01750</fullName>
    </recommendedName>
</protein>
<proteinExistence type="inferred from homology"/>
<evidence type="ECO:0000255" key="1">
    <source>
        <dbReference type="HAMAP-Rule" id="MF_01581"/>
    </source>
</evidence>
<evidence type="ECO:0000256" key="2">
    <source>
        <dbReference type="SAM" id="MobiDB-lite"/>
    </source>
</evidence>
<accession>A7MEI2</accession>
<gene>
    <name type="ordered locus">ESA_01750</name>
</gene>
<feature type="signal peptide" evidence="1">
    <location>
        <begin position="1"/>
        <end position="24"/>
    </location>
</feature>
<feature type="chain" id="PRO_0000349092" description="UPF0482 protein ESA_01750">
    <location>
        <begin position="25"/>
        <end position="109"/>
    </location>
</feature>
<feature type="region of interest" description="Disordered" evidence="2">
    <location>
        <begin position="38"/>
        <end position="63"/>
    </location>
</feature>
<feature type="compositionally biased region" description="Basic and acidic residues" evidence="2">
    <location>
        <begin position="38"/>
        <end position="55"/>
    </location>
</feature>
<organism>
    <name type="scientific">Cronobacter sakazakii (strain ATCC BAA-894)</name>
    <name type="common">Enterobacter sakazakii</name>
    <dbReference type="NCBI Taxonomy" id="290339"/>
    <lineage>
        <taxon>Bacteria</taxon>
        <taxon>Pseudomonadati</taxon>
        <taxon>Pseudomonadota</taxon>
        <taxon>Gammaproteobacteria</taxon>
        <taxon>Enterobacterales</taxon>
        <taxon>Enterobacteriaceae</taxon>
        <taxon>Cronobacter</taxon>
    </lineage>
</organism>